<organism>
    <name type="scientific">Vibrio vulnificus (strain CMCP6)</name>
    <dbReference type="NCBI Taxonomy" id="216895"/>
    <lineage>
        <taxon>Bacteria</taxon>
        <taxon>Pseudomonadati</taxon>
        <taxon>Pseudomonadota</taxon>
        <taxon>Gammaproteobacteria</taxon>
        <taxon>Vibrionales</taxon>
        <taxon>Vibrionaceae</taxon>
        <taxon>Vibrio</taxon>
    </lineage>
</organism>
<dbReference type="EMBL" id="AE016795">
    <property type="protein sequence ID" value="AAO10103.1"/>
    <property type="molecule type" value="Genomic_DNA"/>
</dbReference>
<dbReference type="RefSeq" id="WP_011079607.1">
    <property type="nucleotide sequence ID" value="NC_004459.3"/>
</dbReference>
<dbReference type="SMR" id="Q8DBW9"/>
<dbReference type="GeneID" id="93895938"/>
<dbReference type="KEGG" id="vvu:VV1_1687"/>
<dbReference type="HOGENOM" id="CLU_101379_2_0_6"/>
<dbReference type="Proteomes" id="UP000002275">
    <property type="component" value="Chromosome 1"/>
</dbReference>
<dbReference type="GO" id="GO:0003677">
    <property type="term" value="F:DNA binding"/>
    <property type="evidence" value="ECO:0007669"/>
    <property type="project" value="UniProtKB-UniRule"/>
</dbReference>
<dbReference type="GO" id="GO:0070063">
    <property type="term" value="F:RNA polymerase binding"/>
    <property type="evidence" value="ECO:0007669"/>
    <property type="project" value="InterPro"/>
</dbReference>
<dbReference type="GO" id="GO:0006354">
    <property type="term" value="P:DNA-templated transcription elongation"/>
    <property type="evidence" value="ECO:0007669"/>
    <property type="project" value="TreeGrafter"/>
</dbReference>
<dbReference type="GO" id="GO:0032784">
    <property type="term" value="P:regulation of DNA-templated transcription elongation"/>
    <property type="evidence" value="ECO:0007669"/>
    <property type="project" value="UniProtKB-UniRule"/>
</dbReference>
<dbReference type="FunFam" id="1.10.287.180:FF:000001">
    <property type="entry name" value="Transcription elongation factor GreA"/>
    <property type="match status" value="1"/>
</dbReference>
<dbReference type="FunFam" id="3.10.50.30:FF:000001">
    <property type="entry name" value="Transcription elongation factor GreA"/>
    <property type="match status" value="1"/>
</dbReference>
<dbReference type="Gene3D" id="3.10.50.30">
    <property type="entry name" value="Transcription elongation factor, GreA/GreB, C-terminal domain"/>
    <property type="match status" value="1"/>
</dbReference>
<dbReference type="Gene3D" id="1.10.287.180">
    <property type="entry name" value="Transcription elongation factor, GreA/GreB, N-terminal domain"/>
    <property type="match status" value="1"/>
</dbReference>
<dbReference type="HAMAP" id="MF_00105">
    <property type="entry name" value="GreA_GreB"/>
    <property type="match status" value="1"/>
</dbReference>
<dbReference type="InterPro" id="IPR036953">
    <property type="entry name" value="GreA/GreB_C_sf"/>
</dbReference>
<dbReference type="InterPro" id="IPR018151">
    <property type="entry name" value="TF_GreA/GreB_CS"/>
</dbReference>
<dbReference type="InterPro" id="IPR006359">
    <property type="entry name" value="Tscrpt_elong_fac_GreA"/>
</dbReference>
<dbReference type="InterPro" id="IPR028624">
    <property type="entry name" value="Tscrpt_elong_fac_GreA/B"/>
</dbReference>
<dbReference type="InterPro" id="IPR001437">
    <property type="entry name" value="Tscrpt_elong_fac_GreA/B_C"/>
</dbReference>
<dbReference type="InterPro" id="IPR023459">
    <property type="entry name" value="Tscrpt_elong_fac_GreA/B_fam"/>
</dbReference>
<dbReference type="InterPro" id="IPR022691">
    <property type="entry name" value="Tscrpt_elong_fac_GreA/B_N"/>
</dbReference>
<dbReference type="InterPro" id="IPR036805">
    <property type="entry name" value="Tscrpt_elong_fac_GreA/B_N_sf"/>
</dbReference>
<dbReference type="NCBIfam" id="TIGR01462">
    <property type="entry name" value="greA"/>
    <property type="match status" value="1"/>
</dbReference>
<dbReference type="NCBIfam" id="NF001261">
    <property type="entry name" value="PRK00226.1-2"/>
    <property type="match status" value="1"/>
</dbReference>
<dbReference type="NCBIfam" id="NF001263">
    <property type="entry name" value="PRK00226.1-4"/>
    <property type="match status" value="1"/>
</dbReference>
<dbReference type="NCBIfam" id="NF001264">
    <property type="entry name" value="PRK00226.1-5"/>
    <property type="match status" value="1"/>
</dbReference>
<dbReference type="PANTHER" id="PTHR30437">
    <property type="entry name" value="TRANSCRIPTION ELONGATION FACTOR GREA"/>
    <property type="match status" value="1"/>
</dbReference>
<dbReference type="PANTHER" id="PTHR30437:SF4">
    <property type="entry name" value="TRANSCRIPTION ELONGATION FACTOR GREA"/>
    <property type="match status" value="1"/>
</dbReference>
<dbReference type="Pfam" id="PF01272">
    <property type="entry name" value="GreA_GreB"/>
    <property type="match status" value="1"/>
</dbReference>
<dbReference type="Pfam" id="PF03449">
    <property type="entry name" value="GreA_GreB_N"/>
    <property type="match status" value="1"/>
</dbReference>
<dbReference type="PIRSF" id="PIRSF006092">
    <property type="entry name" value="GreA_GreB"/>
    <property type="match status" value="1"/>
</dbReference>
<dbReference type="SUPFAM" id="SSF54534">
    <property type="entry name" value="FKBP-like"/>
    <property type="match status" value="1"/>
</dbReference>
<dbReference type="SUPFAM" id="SSF46557">
    <property type="entry name" value="GreA transcript cleavage protein, N-terminal domain"/>
    <property type="match status" value="1"/>
</dbReference>
<dbReference type="PROSITE" id="PS00829">
    <property type="entry name" value="GREAB_1"/>
    <property type="match status" value="1"/>
</dbReference>
<dbReference type="PROSITE" id="PS00830">
    <property type="entry name" value="GREAB_2"/>
    <property type="match status" value="1"/>
</dbReference>
<evidence type="ECO:0000255" key="1">
    <source>
        <dbReference type="HAMAP-Rule" id="MF_00105"/>
    </source>
</evidence>
<keyword id="KW-0175">Coiled coil</keyword>
<keyword id="KW-0238">DNA-binding</keyword>
<keyword id="KW-0804">Transcription</keyword>
<keyword id="KW-0805">Transcription regulation</keyword>
<gene>
    <name evidence="1" type="primary">greA</name>
    <name type="ordered locus">VV1_1687</name>
</gene>
<protein>
    <recommendedName>
        <fullName evidence="1">Transcription elongation factor GreA</fullName>
    </recommendedName>
    <alternativeName>
        <fullName evidence="1">Transcript cleavage factor GreA</fullName>
    </alternativeName>
</protein>
<sequence length="157" mass="17544">MEKVPMTARGEQLLRKELERLLKRRPLITEAIAEARELGDLKENAEYHAAREEQGICEAQIRDIEYKLSVAQVIDVSKMENNGKVIFGATVTLIDCDTEEEKTYQIVGDDEADIKSGRISVNSPIARGLIGKMEGDEVAISTPGGMKDFEIDSVEYR</sequence>
<name>GREA_VIBVU</name>
<accession>Q8DBW9</accession>
<reference key="1">
    <citation type="submission" date="2002-12" db="EMBL/GenBank/DDBJ databases">
        <title>Complete genome sequence of Vibrio vulnificus CMCP6.</title>
        <authorList>
            <person name="Rhee J.H."/>
            <person name="Kim S.Y."/>
            <person name="Chung S.S."/>
            <person name="Kim J.J."/>
            <person name="Moon Y.H."/>
            <person name="Jeong H."/>
            <person name="Choy H.E."/>
        </authorList>
    </citation>
    <scope>NUCLEOTIDE SEQUENCE [LARGE SCALE GENOMIC DNA]</scope>
    <source>
        <strain>CMCP6</strain>
    </source>
</reference>
<comment type="function">
    <text evidence="1">Necessary for efficient RNA polymerase transcription elongation past template-encoded arresting sites. The arresting sites in DNA have the property of trapping a certain fraction of elongating RNA polymerases that pass through, resulting in locked ternary complexes. Cleavage of the nascent transcript by cleavage factors such as GreA or GreB allows the resumption of elongation from the new 3'terminus. GreA releases sequences of 2 to 3 nucleotides.</text>
</comment>
<comment type="similarity">
    <text evidence="1">Belongs to the GreA/GreB family.</text>
</comment>
<feature type="chain" id="PRO_0000176993" description="Transcription elongation factor GreA">
    <location>
        <begin position="1"/>
        <end position="157"/>
    </location>
</feature>
<feature type="coiled-coil region" evidence="1">
    <location>
        <begin position="14"/>
        <end position="37"/>
    </location>
</feature>
<proteinExistence type="inferred from homology"/>